<feature type="chain" id="PRO_0000347319" description="Aspartate aminotransferase 2">
    <location>
        <begin position="1" status="less than"/>
        <end position="34" status="greater than"/>
    </location>
</feature>
<feature type="non-consecutive residues" evidence="4">
    <location>
        <begin position="14"/>
        <end position="15"/>
    </location>
</feature>
<feature type="non-consecutive residues" evidence="4">
    <location>
        <begin position="22"/>
        <end position="23"/>
    </location>
</feature>
<feature type="non-terminal residue" evidence="4">
    <location>
        <position position="1"/>
    </location>
</feature>
<feature type="non-terminal residue" evidence="4">
    <location>
        <position position="34"/>
    </location>
</feature>
<keyword id="KW-0032">Aminotransferase</keyword>
<keyword id="KW-0663">Pyridoxal phosphate</keyword>
<keyword id="KW-0808">Transferase</keyword>
<evidence type="ECO:0000250" key="1"/>
<evidence type="ECO:0000250" key="2">
    <source>
        <dbReference type="UniProtKB" id="P28011"/>
    </source>
</evidence>
<evidence type="ECO:0000255" key="3"/>
<evidence type="ECO:0000303" key="4">
    <source>
    </source>
</evidence>
<evidence type="ECO:0000305" key="5"/>
<comment type="function">
    <text evidence="1">Important for the metabolism of amino acids and Krebs-cycle related organic acids. In plants, it is involved in nitrogen metabolism and in aspects of carbon and energy metabolism (By similarity).</text>
</comment>
<comment type="catalytic activity">
    <reaction evidence="5">
        <text>L-aspartate + 2-oxoglutarate = oxaloacetate + L-glutamate</text>
        <dbReference type="Rhea" id="RHEA:21824"/>
        <dbReference type="ChEBI" id="CHEBI:16452"/>
        <dbReference type="ChEBI" id="CHEBI:16810"/>
        <dbReference type="ChEBI" id="CHEBI:29985"/>
        <dbReference type="ChEBI" id="CHEBI:29991"/>
        <dbReference type="EC" id="2.6.1.1"/>
    </reaction>
</comment>
<comment type="cofactor">
    <cofactor evidence="1">
        <name>pyridoxal 5'-phosphate</name>
        <dbReference type="ChEBI" id="CHEBI:597326"/>
    </cofactor>
</comment>
<comment type="subunit">
    <text evidence="2">Homodimer.</text>
</comment>
<comment type="miscellaneous">
    <text evidence="5">In eukaryotes there are cytoplasmic, mitochondrial and chloroplastic isozymes.</text>
</comment>
<comment type="similarity">
    <text evidence="3">Belongs to the class-I pyridoxal-phosphate-dependent aminotransferase family.</text>
</comment>
<name>AAT2_PSEMZ</name>
<proteinExistence type="evidence at protein level"/>
<sequence>VATVQGLSGTGSLRNLGLYAERQIGMFSFTGLNK</sequence>
<reference key="1">
    <citation type="journal article" date="2008" name="J. Proteomics">
        <title>A proteomics approach to identify proteins differentially expressed in Douglas-fir seedlings infected by Phellinus sulphurascens.</title>
        <authorList>
            <person name="Islam M.A."/>
            <person name="Sturrock R.N."/>
            <person name="Ekramoddoullah A.K.M."/>
        </authorList>
    </citation>
    <scope>IDENTIFICATION BY MASS SPECTROMETRY</scope>
</reference>
<organism>
    <name type="scientific">Pseudotsuga menziesii</name>
    <name type="common">Douglas-fir</name>
    <name type="synonym">Abies menziesii</name>
    <dbReference type="NCBI Taxonomy" id="3357"/>
    <lineage>
        <taxon>Eukaryota</taxon>
        <taxon>Viridiplantae</taxon>
        <taxon>Streptophyta</taxon>
        <taxon>Embryophyta</taxon>
        <taxon>Tracheophyta</taxon>
        <taxon>Spermatophyta</taxon>
        <taxon>Pinopsida</taxon>
        <taxon>Pinidae</taxon>
        <taxon>Conifers I</taxon>
        <taxon>Pinales</taxon>
        <taxon>Pinaceae</taxon>
        <taxon>Pseudotsuga</taxon>
    </lineage>
</organism>
<protein>
    <recommendedName>
        <fullName evidence="2">Aspartate aminotransferase 2</fullName>
        <ecNumber>2.6.1.1</ecNumber>
    </recommendedName>
    <alternativeName>
        <fullName evidence="2">Transaminase A</fullName>
    </alternativeName>
</protein>
<dbReference type="EC" id="2.6.1.1"/>
<dbReference type="SMR" id="P85951"/>
<dbReference type="GO" id="GO:0004069">
    <property type="term" value="F:L-aspartate:2-oxoglutarate aminotransferase activity"/>
    <property type="evidence" value="ECO:0007669"/>
    <property type="project" value="UniProtKB-EC"/>
</dbReference>
<accession>P85951</accession>